<proteinExistence type="inferred from homology"/>
<evidence type="ECO:0000255" key="1">
    <source>
        <dbReference type="HAMAP-Rule" id="MF_01533"/>
    </source>
</evidence>
<gene>
    <name evidence="1" type="primary">rhaR</name>
    <name type="ordered locus">SeAg_B4292</name>
</gene>
<protein>
    <recommendedName>
        <fullName evidence="1">HTH-type transcriptional activator RhaR</fullName>
    </recommendedName>
    <alternativeName>
        <fullName evidence="1">L-rhamnose operon transcriptional activator RhaR</fullName>
    </alternativeName>
</protein>
<sequence>MANQLILLKKDFFTDEQQAVTVADRYPQDVFAEHTHEFCELVMVWRGNGLHVLNERPYRITRGDLFYIRAEDKHSYTSVNDLVLQNIIYCPERLKLNINWQAMIPGFQGAQWHPHWRLGSMGMNQARQVINQLEHESNGRDPLANEMAELLFGQLVMTLKRHRYATDDLPATSRETLLDKLITALANSLECPFALDAFCQQEQCSERVLRQQFRAQTGMTINQYLRQVRICHAQYLLQHSPLMISEISMQCGFEDSNYFSVVFTRETGMTPSQWRHLSNQSD</sequence>
<feature type="chain" id="PRO_1000200938" description="HTH-type transcriptional activator RhaR">
    <location>
        <begin position="1"/>
        <end position="282"/>
    </location>
</feature>
<feature type="domain" description="HTH araC/xylS-type" evidence="1">
    <location>
        <begin position="179"/>
        <end position="277"/>
    </location>
</feature>
<feature type="DNA-binding region" description="H-T-H motif" evidence="1">
    <location>
        <begin position="196"/>
        <end position="217"/>
    </location>
</feature>
<feature type="DNA-binding region" description="H-T-H motif" evidence="1">
    <location>
        <begin position="244"/>
        <end position="267"/>
    </location>
</feature>
<feature type="site" description="Interaction with sigma-70" evidence="1">
    <location>
        <position position="246"/>
    </location>
</feature>
<dbReference type="EMBL" id="CP001138">
    <property type="protein sequence ID" value="ACH49539.1"/>
    <property type="molecule type" value="Genomic_DNA"/>
</dbReference>
<dbReference type="RefSeq" id="WP_000013288.1">
    <property type="nucleotide sequence ID" value="NC_011149.1"/>
</dbReference>
<dbReference type="SMR" id="B5F0N0"/>
<dbReference type="KEGG" id="sea:SeAg_B4292"/>
<dbReference type="HOGENOM" id="CLU_000445_88_5_6"/>
<dbReference type="Proteomes" id="UP000008819">
    <property type="component" value="Chromosome"/>
</dbReference>
<dbReference type="GO" id="GO:0005737">
    <property type="term" value="C:cytoplasm"/>
    <property type="evidence" value="ECO:0007669"/>
    <property type="project" value="UniProtKB-SubCell"/>
</dbReference>
<dbReference type="GO" id="GO:0003700">
    <property type="term" value="F:DNA-binding transcription factor activity"/>
    <property type="evidence" value="ECO:0007669"/>
    <property type="project" value="UniProtKB-UniRule"/>
</dbReference>
<dbReference type="GO" id="GO:0043565">
    <property type="term" value="F:sequence-specific DNA binding"/>
    <property type="evidence" value="ECO:0007669"/>
    <property type="project" value="InterPro"/>
</dbReference>
<dbReference type="GO" id="GO:0045893">
    <property type="term" value="P:positive regulation of DNA-templated transcription"/>
    <property type="evidence" value="ECO:0007669"/>
    <property type="project" value="UniProtKB-UniRule"/>
</dbReference>
<dbReference type="GO" id="GO:0019299">
    <property type="term" value="P:rhamnose metabolic process"/>
    <property type="evidence" value="ECO:0007669"/>
    <property type="project" value="UniProtKB-UniRule"/>
</dbReference>
<dbReference type="CDD" id="cd06977">
    <property type="entry name" value="cupin_RhaR_RhaS-like_N"/>
    <property type="match status" value="1"/>
</dbReference>
<dbReference type="Gene3D" id="1.10.10.60">
    <property type="entry name" value="Homeodomain-like"/>
    <property type="match status" value="2"/>
</dbReference>
<dbReference type="Gene3D" id="2.60.120.10">
    <property type="entry name" value="Jelly Rolls"/>
    <property type="match status" value="1"/>
</dbReference>
<dbReference type="HAMAP" id="MF_01533">
    <property type="entry name" value="HTH_type_RhaR"/>
    <property type="match status" value="1"/>
</dbReference>
<dbReference type="InterPro" id="IPR003313">
    <property type="entry name" value="AraC-bd"/>
</dbReference>
<dbReference type="InterPro" id="IPR009057">
    <property type="entry name" value="Homeodomain-like_sf"/>
</dbReference>
<dbReference type="InterPro" id="IPR018060">
    <property type="entry name" value="HTH_AraC"/>
</dbReference>
<dbReference type="InterPro" id="IPR018062">
    <property type="entry name" value="HTH_AraC-typ_CS"/>
</dbReference>
<dbReference type="InterPro" id="IPR047220">
    <property type="entry name" value="RhaR_RhaS-like_N"/>
</dbReference>
<dbReference type="InterPro" id="IPR014710">
    <property type="entry name" value="RmlC-like_jellyroll"/>
</dbReference>
<dbReference type="InterPro" id="IPR011051">
    <property type="entry name" value="RmlC_Cupin_sf"/>
</dbReference>
<dbReference type="InterPro" id="IPR023699">
    <property type="entry name" value="Tscrpt_act_RhaR"/>
</dbReference>
<dbReference type="InterPro" id="IPR020449">
    <property type="entry name" value="Tscrpt_reg_AraC-type_HTH"/>
</dbReference>
<dbReference type="NCBIfam" id="NF010025">
    <property type="entry name" value="PRK13500.1"/>
    <property type="match status" value="1"/>
</dbReference>
<dbReference type="NCBIfam" id="NF010026">
    <property type="entry name" value="PRK13501.1"/>
    <property type="match status" value="1"/>
</dbReference>
<dbReference type="NCBIfam" id="NF010027">
    <property type="entry name" value="PRK13502.1"/>
    <property type="match status" value="1"/>
</dbReference>
<dbReference type="PANTHER" id="PTHR43280">
    <property type="entry name" value="ARAC-FAMILY TRANSCRIPTIONAL REGULATOR"/>
    <property type="match status" value="1"/>
</dbReference>
<dbReference type="PANTHER" id="PTHR43280:SF13">
    <property type="entry name" value="HTH-TYPE TRANSCRIPTIONAL ACTIVATOR RHAR"/>
    <property type="match status" value="1"/>
</dbReference>
<dbReference type="Pfam" id="PF02311">
    <property type="entry name" value="AraC_binding"/>
    <property type="match status" value="1"/>
</dbReference>
<dbReference type="Pfam" id="PF12833">
    <property type="entry name" value="HTH_18"/>
    <property type="match status" value="1"/>
</dbReference>
<dbReference type="PRINTS" id="PR00032">
    <property type="entry name" value="HTHARAC"/>
</dbReference>
<dbReference type="SMART" id="SM00342">
    <property type="entry name" value="HTH_ARAC"/>
    <property type="match status" value="1"/>
</dbReference>
<dbReference type="SUPFAM" id="SSF46689">
    <property type="entry name" value="Homeodomain-like"/>
    <property type="match status" value="1"/>
</dbReference>
<dbReference type="SUPFAM" id="SSF51182">
    <property type="entry name" value="RmlC-like cupins"/>
    <property type="match status" value="1"/>
</dbReference>
<dbReference type="PROSITE" id="PS00041">
    <property type="entry name" value="HTH_ARAC_FAMILY_1"/>
    <property type="match status" value="1"/>
</dbReference>
<dbReference type="PROSITE" id="PS01124">
    <property type="entry name" value="HTH_ARAC_FAMILY_2"/>
    <property type="match status" value="1"/>
</dbReference>
<name>RHAR_SALA4</name>
<reference key="1">
    <citation type="journal article" date="2011" name="J. Bacteriol.">
        <title>Comparative genomics of 28 Salmonella enterica isolates: evidence for CRISPR-mediated adaptive sublineage evolution.</title>
        <authorList>
            <person name="Fricke W.F."/>
            <person name="Mammel M.K."/>
            <person name="McDermott P.F."/>
            <person name="Tartera C."/>
            <person name="White D.G."/>
            <person name="Leclerc J.E."/>
            <person name="Ravel J."/>
            <person name="Cebula T.A."/>
        </authorList>
    </citation>
    <scope>NUCLEOTIDE SEQUENCE [LARGE SCALE GENOMIC DNA]</scope>
    <source>
        <strain>SL483</strain>
    </source>
</reference>
<comment type="function">
    <text evidence="1">Activates expression of the rhaSR operon in response to L-rhamnose.</text>
</comment>
<comment type="subunit">
    <text evidence="1">Binds DNA as a dimer.</text>
</comment>
<comment type="subcellular location">
    <subcellularLocation>
        <location evidence="1">Cytoplasm</location>
    </subcellularLocation>
</comment>
<accession>B5F0N0</accession>
<keyword id="KW-0010">Activator</keyword>
<keyword id="KW-0963">Cytoplasm</keyword>
<keyword id="KW-0238">DNA-binding</keyword>
<keyword id="KW-0677">Repeat</keyword>
<keyword id="KW-0684">Rhamnose metabolism</keyword>
<keyword id="KW-0804">Transcription</keyword>
<keyword id="KW-0805">Transcription regulation</keyword>
<organism>
    <name type="scientific">Salmonella agona (strain SL483)</name>
    <dbReference type="NCBI Taxonomy" id="454166"/>
    <lineage>
        <taxon>Bacteria</taxon>
        <taxon>Pseudomonadati</taxon>
        <taxon>Pseudomonadota</taxon>
        <taxon>Gammaproteobacteria</taxon>
        <taxon>Enterobacterales</taxon>
        <taxon>Enterobacteriaceae</taxon>
        <taxon>Salmonella</taxon>
    </lineage>
</organism>